<gene>
    <name evidence="1" type="primary">guaA</name>
    <name type="ordered locus">Shew_1298</name>
</gene>
<name>GUAA_SHELP</name>
<organism>
    <name type="scientific">Shewanella loihica (strain ATCC BAA-1088 / PV-4)</name>
    <dbReference type="NCBI Taxonomy" id="323850"/>
    <lineage>
        <taxon>Bacteria</taxon>
        <taxon>Pseudomonadati</taxon>
        <taxon>Pseudomonadota</taxon>
        <taxon>Gammaproteobacteria</taxon>
        <taxon>Alteromonadales</taxon>
        <taxon>Shewanellaceae</taxon>
        <taxon>Shewanella</taxon>
    </lineage>
</organism>
<reference key="1">
    <citation type="submission" date="2007-03" db="EMBL/GenBank/DDBJ databases">
        <title>Complete sequence of Shewanella loihica PV-4.</title>
        <authorList>
            <consortium name="US DOE Joint Genome Institute"/>
            <person name="Copeland A."/>
            <person name="Lucas S."/>
            <person name="Lapidus A."/>
            <person name="Barry K."/>
            <person name="Detter J.C."/>
            <person name="Glavina del Rio T."/>
            <person name="Hammon N."/>
            <person name="Israni S."/>
            <person name="Dalin E."/>
            <person name="Tice H."/>
            <person name="Pitluck S."/>
            <person name="Chain P."/>
            <person name="Malfatti S."/>
            <person name="Shin M."/>
            <person name="Vergez L."/>
            <person name="Schmutz J."/>
            <person name="Larimer F."/>
            <person name="Land M."/>
            <person name="Hauser L."/>
            <person name="Kyrpides N."/>
            <person name="Mikhailova N."/>
            <person name="Romine M.F."/>
            <person name="Serres G."/>
            <person name="Fredrickson J."/>
            <person name="Tiedje J."/>
            <person name="Richardson P."/>
        </authorList>
    </citation>
    <scope>NUCLEOTIDE SEQUENCE [LARGE SCALE GENOMIC DNA]</scope>
    <source>
        <strain>ATCC BAA-1088 / PV-4</strain>
    </source>
</reference>
<evidence type="ECO:0000255" key="1">
    <source>
        <dbReference type="HAMAP-Rule" id="MF_00344"/>
    </source>
</evidence>
<keyword id="KW-0067">ATP-binding</keyword>
<keyword id="KW-0315">Glutamine amidotransferase</keyword>
<keyword id="KW-0332">GMP biosynthesis</keyword>
<keyword id="KW-0436">Ligase</keyword>
<keyword id="KW-0547">Nucleotide-binding</keyword>
<keyword id="KW-0658">Purine biosynthesis</keyword>
<keyword id="KW-1185">Reference proteome</keyword>
<protein>
    <recommendedName>
        <fullName evidence="1">GMP synthase [glutamine-hydrolyzing]</fullName>
        <ecNumber evidence="1">6.3.5.2</ecNumber>
    </recommendedName>
    <alternativeName>
        <fullName evidence="1">GMP synthetase</fullName>
    </alternativeName>
    <alternativeName>
        <fullName evidence="1">Glutamine amidotransferase</fullName>
    </alternativeName>
</protein>
<accession>A3QCH0</accession>
<dbReference type="EC" id="6.3.5.2" evidence="1"/>
<dbReference type="EMBL" id="CP000606">
    <property type="protein sequence ID" value="ABO23168.1"/>
    <property type="molecule type" value="Genomic_DNA"/>
</dbReference>
<dbReference type="RefSeq" id="WP_011865100.1">
    <property type="nucleotide sequence ID" value="NC_009092.1"/>
</dbReference>
<dbReference type="SMR" id="A3QCH0"/>
<dbReference type="STRING" id="323850.Shew_1298"/>
<dbReference type="MEROPS" id="C26.A07"/>
<dbReference type="KEGG" id="slo:Shew_1298"/>
<dbReference type="eggNOG" id="COG0518">
    <property type="taxonomic scope" value="Bacteria"/>
</dbReference>
<dbReference type="eggNOG" id="COG0519">
    <property type="taxonomic scope" value="Bacteria"/>
</dbReference>
<dbReference type="HOGENOM" id="CLU_014340_0_5_6"/>
<dbReference type="OrthoDB" id="9802219at2"/>
<dbReference type="UniPathway" id="UPA00189">
    <property type="reaction ID" value="UER00296"/>
</dbReference>
<dbReference type="Proteomes" id="UP000001558">
    <property type="component" value="Chromosome"/>
</dbReference>
<dbReference type="GO" id="GO:0005829">
    <property type="term" value="C:cytosol"/>
    <property type="evidence" value="ECO:0007669"/>
    <property type="project" value="TreeGrafter"/>
</dbReference>
<dbReference type="GO" id="GO:0005524">
    <property type="term" value="F:ATP binding"/>
    <property type="evidence" value="ECO:0007669"/>
    <property type="project" value="UniProtKB-UniRule"/>
</dbReference>
<dbReference type="GO" id="GO:0003921">
    <property type="term" value="F:GMP synthase activity"/>
    <property type="evidence" value="ECO:0007669"/>
    <property type="project" value="InterPro"/>
</dbReference>
<dbReference type="CDD" id="cd01742">
    <property type="entry name" value="GATase1_GMP_Synthase"/>
    <property type="match status" value="1"/>
</dbReference>
<dbReference type="CDD" id="cd01997">
    <property type="entry name" value="GMP_synthase_C"/>
    <property type="match status" value="1"/>
</dbReference>
<dbReference type="FunFam" id="3.30.300.10:FF:000002">
    <property type="entry name" value="GMP synthase [glutamine-hydrolyzing]"/>
    <property type="match status" value="1"/>
</dbReference>
<dbReference type="FunFam" id="3.40.50.620:FF:000001">
    <property type="entry name" value="GMP synthase [glutamine-hydrolyzing]"/>
    <property type="match status" value="1"/>
</dbReference>
<dbReference type="FunFam" id="3.40.50.880:FF:000001">
    <property type="entry name" value="GMP synthase [glutamine-hydrolyzing]"/>
    <property type="match status" value="1"/>
</dbReference>
<dbReference type="Gene3D" id="3.30.300.10">
    <property type="match status" value="1"/>
</dbReference>
<dbReference type="Gene3D" id="3.40.50.880">
    <property type="match status" value="1"/>
</dbReference>
<dbReference type="Gene3D" id="3.40.50.620">
    <property type="entry name" value="HUPs"/>
    <property type="match status" value="1"/>
</dbReference>
<dbReference type="HAMAP" id="MF_00344">
    <property type="entry name" value="GMP_synthase"/>
    <property type="match status" value="1"/>
</dbReference>
<dbReference type="InterPro" id="IPR029062">
    <property type="entry name" value="Class_I_gatase-like"/>
</dbReference>
<dbReference type="InterPro" id="IPR017926">
    <property type="entry name" value="GATASE"/>
</dbReference>
<dbReference type="InterPro" id="IPR001674">
    <property type="entry name" value="GMP_synth_C"/>
</dbReference>
<dbReference type="InterPro" id="IPR004739">
    <property type="entry name" value="GMP_synth_GATase"/>
</dbReference>
<dbReference type="InterPro" id="IPR022955">
    <property type="entry name" value="GMP_synthase"/>
</dbReference>
<dbReference type="InterPro" id="IPR025777">
    <property type="entry name" value="GMPS_ATP_PPase_dom"/>
</dbReference>
<dbReference type="InterPro" id="IPR022310">
    <property type="entry name" value="NAD/GMP_synthase"/>
</dbReference>
<dbReference type="InterPro" id="IPR014729">
    <property type="entry name" value="Rossmann-like_a/b/a_fold"/>
</dbReference>
<dbReference type="NCBIfam" id="TIGR00884">
    <property type="entry name" value="guaA_Cterm"/>
    <property type="match status" value="1"/>
</dbReference>
<dbReference type="NCBIfam" id="TIGR00888">
    <property type="entry name" value="guaA_Nterm"/>
    <property type="match status" value="1"/>
</dbReference>
<dbReference type="NCBIfam" id="NF000848">
    <property type="entry name" value="PRK00074.1"/>
    <property type="match status" value="1"/>
</dbReference>
<dbReference type="PANTHER" id="PTHR11922:SF2">
    <property type="entry name" value="GMP SYNTHASE [GLUTAMINE-HYDROLYZING]"/>
    <property type="match status" value="1"/>
</dbReference>
<dbReference type="PANTHER" id="PTHR11922">
    <property type="entry name" value="GMP SYNTHASE-RELATED"/>
    <property type="match status" value="1"/>
</dbReference>
<dbReference type="Pfam" id="PF00117">
    <property type="entry name" value="GATase"/>
    <property type="match status" value="1"/>
</dbReference>
<dbReference type="Pfam" id="PF00958">
    <property type="entry name" value="GMP_synt_C"/>
    <property type="match status" value="1"/>
</dbReference>
<dbReference type="Pfam" id="PF02540">
    <property type="entry name" value="NAD_synthase"/>
    <property type="match status" value="1"/>
</dbReference>
<dbReference type="PRINTS" id="PR00097">
    <property type="entry name" value="ANTSNTHASEII"/>
</dbReference>
<dbReference type="PRINTS" id="PR00099">
    <property type="entry name" value="CPSGATASE"/>
</dbReference>
<dbReference type="PRINTS" id="PR00096">
    <property type="entry name" value="GATASE"/>
</dbReference>
<dbReference type="SUPFAM" id="SSF52402">
    <property type="entry name" value="Adenine nucleotide alpha hydrolases-like"/>
    <property type="match status" value="1"/>
</dbReference>
<dbReference type="SUPFAM" id="SSF52317">
    <property type="entry name" value="Class I glutamine amidotransferase-like"/>
    <property type="match status" value="1"/>
</dbReference>
<dbReference type="SUPFAM" id="SSF54810">
    <property type="entry name" value="GMP synthetase C-terminal dimerisation domain"/>
    <property type="match status" value="1"/>
</dbReference>
<dbReference type="PROSITE" id="PS51273">
    <property type="entry name" value="GATASE_TYPE_1"/>
    <property type="match status" value="1"/>
</dbReference>
<dbReference type="PROSITE" id="PS51553">
    <property type="entry name" value="GMPS_ATP_PPASE"/>
    <property type="match status" value="1"/>
</dbReference>
<sequence>MSNIHDHKILILDFGSQYTQLIARRIREIGVYCELWAWDVSEEQIKAFAPNGIILAGGPESVTADNSPRAPEYVFNAGVPVLGICYGMQTMSEQLGGKVIQGVGEGEFGYAQVEVQAASELFKSIEDAVSDSGKALLDVWMSHGDKVSEIPEGFVTVAKTDTCPYAAMANEEKRFYGVQFHPEVTHTRQGKRMLEHFALDICQCEANWKPSSIIEDAVARIKEQVGDDEVILGLSGGVDSSVVAMLLHRAIGSKLTCVFVDNGLLRLNEADQVLEMFGDHFGLNIVHVDAESRFLDALAGEAEPEAKRKIIGKVFVDIFDEESRKCVNAKWLAQGTIYPDVIESAGSATGKAHVIKSHHNVGGLPDDMELGLVEPLRELFKDEVRKIGLELGLPYNMLYRHPFPGPGLGVRVLGEVKKEYCDLLRRADAIFIEELHKADLYNKVSQAFTVFLPVRSVGVMGDGRKYDWVVSLRAVETIDFMTAHWAHLPYDFLGRVSNRIINEIDGISRVVYDISGKPPATIEWE</sequence>
<comment type="function">
    <text evidence="1">Catalyzes the synthesis of GMP from XMP.</text>
</comment>
<comment type="catalytic activity">
    <reaction evidence="1">
        <text>XMP + L-glutamine + ATP + H2O = GMP + L-glutamate + AMP + diphosphate + 2 H(+)</text>
        <dbReference type="Rhea" id="RHEA:11680"/>
        <dbReference type="ChEBI" id="CHEBI:15377"/>
        <dbReference type="ChEBI" id="CHEBI:15378"/>
        <dbReference type="ChEBI" id="CHEBI:29985"/>
        <dbReference type="ChEBI" id="CHEBI:30616"/>
        <dbReference type="ChEBI" id="CHEBI:33019"/>
        <dbReference type="ChEBI" id="CHEBI:57464"/>
        <dbReference type="ChEBI" id="CHEBI:58115"/>
        <dbReference type="ChEBI" id="CHEBI:58359"/>
        <dbReference type="ChEBI" id="CHEBI:456215"/>
        <dbReference type="EC" id="6.3.5.2"/>
    </reaction>
</comment>
<comment type="pathway">
    <text evidence="1">Purine metabolism; GMP biosynthesis; GMP from XMP (L-Gln route): step 1/1.</text>
</comment>
<comment type="subunit">
    <text evidence="1">Homodimer.</text>
</comment>
<feature type="chain" id="PRO_1000120404" description="GMP synthase [glutamine-hydrolyzing]">
    <location>
        <begin position="1"/>
        <end position="525"/>
    </location>
</feature>
<feature type="domain" description="Glutamine amidotransferase type-1" evidence="1">
    <location>
        <begin position="8"/>
        <end position="207"/>
    </location>
</feature>
<feature type="domain" description="GMPS ATP-PPase" evidence="1">
    <location>
        <begin position="208"/>
        <end position="400"/>
    </location>
</feature>
<feature type="active site" description="Nucleophile" evidence="1">
    <location>
        <position position="85"/>
    </location>
</feature>
<feature type="active site" evidence="1">
    <location>
        <position position="181"/>
    </location>
</feature>
<feature type="active site" evidence="1">
    <location>
        <position position="183"/>
    </location>
</feature>
<feature type="binding site" evidence="1">
    <location>
        <begin position="235"/>
        <end position="241"/>
    </location>
    <ligand>
        <name>ATP</name>
        <dbReference type="ChEBI" id="CHEBI:30616"/>
    </ligand>
</feature>
<proteinExistence type="inferred from homology"/>